<organism>
    <name type="scientific">Salmonella paratyphi A (strain ATCC 9150 / SARB42)</name>
    <dbReference type="NCBI Taxonomy" id="295319"/>
    <lineage>
        <taxon>Bacteria</taxon>
        <taxon>Pseudomonadati</taxon>
        <taxon>Pseudomonadota</taxon>
        <taxon>Gammaproteobacteria</taxon>
        <taxon>Enterobacterales</taxon>
        <taxon>Enterobacteriaceae</taxon>
        <taxon>Salmonella</taxon>
    </lineage>
</organism>
<protein>
    <recommendedName>
        <fullName evidence="1">Asparagine--tRNA ligase</fullName>
        <ecNumber evidence="1">6.1.1.22</ecNumber>
    </recommendedName>
    <alternativeName>
        <fullName evidence="1">Asparaginyl-tRNA synthetase</fullName>
        <shortName evidence="1">AsnRS</shortName>
    </alternativeName>
</protein>
<name>SYN_SALPA</name>
<proteinExistence type="inferred from homology"/>
<gene>
    <name evidence="1" type="primary">asnS</name>
    <name type="ordered locus">SPA1798</name>
</gene>
<reference key="1">
    <citation type="journal article" date="2004" name="Nat. Genet.">
        <title>Comparison of genome degradation in Paratyphi A and Typhi, human-restricted serovars of Salmonella enterica that cause typhoid.</title>
        <authorList>
            <person name="McClelland M."/>
            <person name="Sanderson K.E."/>
            <person name="Clifton S.W."/>
            <person name="Latreille P."/>
            <person name="Porwollik S."/>
            <person name="Sabo A."/>
            <person name="Meyer R."/>
            <person name="Bieri T."/>
            <person name="Ozersky P."/>
            <person name="McLellan M."/>
            <person name="Harkins C.R."/>
            <person name="Wang C."/>
            <person name="Nguyen C."/>
            <person name="Berghoff A."/>
            <person name="Elliott G."/>
            <person name="Kohlberg S."/>
            <person name="Strong C."/>
            <person name="Du F."/>
            <person name="Carter J."/>
            <person name="Kremizki C."/>
            <person name="Layman D."/>
            <person name="Leonard S."/>
            <person name="Sun H."/>
            <person name="Fulton L."/>
            <person name="Nash W."/>
            <person name="Miner T."/>
            <person name="Minx P."/>
            <person name="Delehaunty K."/>
            <person name="Fronick C."/>
            <person name="Magrini V."/>
            <person name="Nhan M."/>
            <person name="Warren W."/>
            <person name="Florea L."/>
            <person name="Spieth J."/>
            <person name="Wilson R.K."/>
        </authorList>
    </citation>
    <scope>NUCLEOTIDE SEQUENCE [LARGE SCALE GENOMIC DNA]</scope>
    <source>
        <strain>ATCC 9150 / SARB42</strain>
    </source>
</reference>
<keyword id="KW-0030">Aminoacyl-tRNA synthetase</keyword>
<keyword id="KW-0067">ATP-binding</keyword>
<keyword id="KW-0963">Cytoplasm</keyword>
<keyword id="KW-0436">Ligase</keyword>
<keyword id="KW-0547">Nucleotide-binding</keyword>
<keyword id="KW-0648">Protein biosynthesis</keyword>
<comment type="catalytic activity">
    <reaction evidence="1">
        <text>tRNA(Asn) + L-asparagine + ATP = L-asparaginyl-tRNA(Asn) + AMP + diphosphate + H(+)</text>
        <dbReference type="Rhea" id="RHEA:11180"/>
        <dbReference type="Rhea" id="RHEA-COMP:9659"/>
        <dbReference type="Rhea" id="RHEA-COMP:9674"/>
        <dbReference type="ChEBI" id="CHEBI:15378"/>
        <dbReference type="ChEBI" id="CHEBI:30616"/>
        <dbReference type="ChEBI" id="CHEBI:33019"/>
        <dbReference type="ChEBI" id="CHEBI:58048"/>
        <dbReference type="ChEBI" id="CHEBI:78442"/>
        <dbReference type="ChEBI" id="CHEBI:78515"/>
        <dbReference type="ChEBI" id="CHEBI:456215"/>
        <dbReference type="EC" id="6.1.1.22"/>
    </reaction>
</comment>
<comment type="subunit">
    <text evidence="1">Homodimer.</text>
</comment>
<comment type="subcellular location">
    <subcellularLocation>
        <location evidence="1">Cytoplasm</location>
    </subcellularLocation>
</comment>
<comment type="similarity">
    <text evidence="1">Belongs to the class-II aminoacyl-tRNA synthetase family.</text>
</comment>
<dbReference type="EC" id="6.1.1.22" evidence="1"/>
<dbReference type="EMBL" id="CP000026">
    <property type="protein sequence ID" value="AAV77714.1"/>
    <property type="molecule type" value="Genomic_DNA"/>
</dbReference>
<dbReference type="RefSeq" id="WP_000117867.1">
    <property type="nucleotide sequence ID" value="NC_006511.1"/>
</dbReference>
<dbReference type="SMR" id="Q5PGF0"/>
<dbReference type="KEGG" id="spt:SPA1798"/>
<dbReference type="HOGENOM" id="CLU_004553_2_0_6"/>
<dbReference type="Proteomes" id="UP000008185">
    <property type="component" value="Chromosome"/>
</dbReference>
<dbReference type="GO" id="GO:0005737">
    <property type="term" value="C:cytoplasm"/>
    <property type="evidence" value="ECO:0007669"/>
    <property type="project" value="UniProtKB-SubCell"/>
</dbReference>
<dbReference type="GO" id="GO:0004816">
    <property type="term" value="F:asparagine-tRNA ligase activity"/>
    <property type="evidence" value="ECO:0007669"/>
    <property type="project" value="UniProtKB-UniRule"/>
</dbReference>
<dbReference type="GO" id="GO:0005524">
    <property type="term" value="F:ATP binding"/>
    <property type="evidence" value="ECO:0007669"/>
    <property type="project" value="UniProtKB-UniRule"/>
</dbReference>
<dbReference type="GO" id="GO:0003676">
    <property type="term" value="F:nucleic acid binding"/>
    <property type="evidence" value="ECO:0007669"/>
    <property type="project" value="InterPro"/>
</dbReference>
<dbReference type="GO" id="GO:0006421">
    <property type="term" value="P:asparaginyl-tRNA aminoacylation"/>
    <property type="evidence" value="ECO:0007669"/>
    <property type="project" value="UniProtKB-UniRule"/>
</dbReference>
<dbReference type="CDD" id="cd00776">
    <property type="entry name" value="AsxRS_core"/>
    <property type="match status" value="1"/>
</dbReference>
<dbReference type="CDD" id="cd04318">
    <property type="entry name" value="EcAsnRS_like_N"/>
    <property type="match status" value="1"/>
</dbReference>
<dbReference type="FunFam" id="2.40.50.140:FF:000116">
    <property type="entry name" value="Asparagine--tRNA ligase"/>
    <property type="match status" value="1"/>
</dbReference>
<dbReference type="FunFam" id="3.30.930.10:FF:000016">
    <property type="entry name" value="Asparagine--tRNA ligase"/>
    <property type="match status" value="1"/>
</dbReference>
<dbReference type="Gene3D" id="3.30.930.10">
    <property type="entry name" value="Bira Bifunctional Protein, Domain 2"/>
    <property type="match status" value="1"/>
</dbReference>
<dbReference type="Gene3D" id="2.40.50.140">
    <property type="entry name" value="Nucleic acid-binding proteins"/>
    <property type="match status" value="1"/>
</dbReference>
<dbReference type="HAMAP" id="MF_00534">
    <property type="entry name" value="Asn_tRNA_synth"/>
    <property type="match status" value="1"/>
</dbReference>
<dbReference type="InterPro" id="IPR004364">
    <property type="entry name" value="Aa-tRNA-synt_II"/>
</dbReference>
<dbReference type="InterPro" id="IPR006195">
    <property type="entry name" value="aa-tRNA-synth_II"/>
</dbReference>
<dbReference type="InterPro" id="IPR045864">
    <property type="entry name" value="aa-tRNA-synth_II/BPL/LPL"/>
</dbReference>
<dbReference type="InterPro" id="IPR004522">
    <property type="entry name" value="Asn-tRNA-ligase"/>
</dbReference>
<dbReference type="InterPro" id="IPR002312">
    <property type="entry name" value="Asp/Asn-tRNA-synth_IIb"/>
</dbReference>
<dbReference type="InterPro" id="IPR012340">
    <property type="entry name" value="NA-bd_OB-fold"/>
</dbReference>
<dbReference type="InterPro" id="IPR004365">
    <property type="entry name" value="NA-bd_OB_tRNA"/>
</dbReference>
<dbReference type="NCBIfam" id="TIGR00457">
    <property type="entry name" value="asnS"/>
    <property type="match status" value="1"/>
</dbReference>
<dbReference type="NCBIfam" id="NF003037">
    <property type="entry name" value="PRK03932.1"/>
    <property type="match status" value="1"/>
</dbReference>
<dbReference type="PANTHER" id="PTHR22594:SF34">
    <property type="entry name" value="ASPARAGINE--TRNA LIGASE, MITOCHONDRIAL-RELATED"/>
    <property type="match status" value="1"/>
</dbReference>
<dbReference type="PANTHER" id="PTHR22594">
    <property type="entry name" value="ASPARTYL/LYSYL-TRNA SYNTHETASE"/>
    <property type="match status" value="1"/>
</dbReference>
<dbReference type="Pfam" id="PF00152">
    <property type="entry name" value="tRNA-synt_2"/>
    <property type="match status" value="1"/>
</dbReference>
<dbReference type="Pfam" id="PF01336">
    <property type="entry name" value="tRNA_anti-codon"/>
    <property type="match status" value="1"/>
</dbReference>
<dbReference type="PRINTS" id="PR01042">
    <property type="entry name" value="TRNASYNTHASP"/>
</dbReference>
<dbReference type="SUPFAM" id="SSF55681">
    <property type="entry name" value="Class II aaRS and biotin synthetases"/>
    <property type="match status" value="1"/>
</dbReference>
<dbReference type="SUPFAM" id="SSF50249">
    <property type="entry name" value="Nucleic acid-binding proteins"/>
    <property type="match status" value="1"/>
</dbReference>
<dbReference type="PROSITE" id="PS50862">
    <property type="entry name" value="AA_TRNA_LIGASE_II"/>
    <property type="match status" value="1"/>
</dbReference>
<accession>Q5PGF0</accession>
<sequence>MSVVPVADVLQGRVAVDQEVTVRGWVRTRRDSKAGISFLAVYDGSCFDPVQAVINNSLPNYNEEVLHLTTGCSVVVTGKVVASPGQGQSFEIQATKVEVAGWVEDPDTYPMAAKRHSIEYLREVAHLRPRTNLIGAVARVRHTLAQALHRFFDEQGFFWVSTPLITASDTEGAGEMFRVSTLDLENLPRNDQGRVDFDKDFFGKESFLTVSGQLNGETYACALSKIYTFGPTFRAENSNTSRHLAEFWMLEPEVAFADLEDNARLAEAMLKYVFKAVLEERADDMKFFAERVDKDAIARLERFVSTDFAQVDYTDAVAILERCGKTFENPVFWGVDLSSEHERYLAEEHFKAPVVVKNYPKEIKAFYMRLNEDGKTVAAMDVLAPGIGEIIGGSQREERLDVLDARMAEMGLNKEDYWWYRDLRRYGTVPHSGFGLGFERLIAYVTGVQNVRDVIPFPRTPRNASF</sequence>
<feature type="chain" id="PRO_1000051418" description="Asparagine--tRNA ligase">
    <location>
        <begin position="1"/>
        <end position="466"/>
    </location>
</feature>
<evidence type="ECO:0000255" key="1">
    <source>
        <dbReference type="HAMAP-Rule" id="MF_00534"/>
    </source>
</evidence>